<organism>
    <name type="scientific">Escherichia coli (strain K12)</name>
    <dbReference type="NCBI Taxonomy" id="83333"/>
    <lineage>
        <taxon>Bacteria</taxon>
        <taxon>Pseudomonadati</taxon>
        <taxon>Pseudomonadota</taxon>
        <taxon>Gammaproteobacteria</taxon>
        <taxon>Enterobacterales</taxon>
        <taxon>Enterobacteriaceae</taxon>
        <taxon>Escherichia</taxon>
    </lineage>
</organism>
<accession>P67826</accession>
<accession>P46719</accession>
<accession>P76294</accession>
<name>CUTC_ECOLI</name>
<reference key="1">
    <citation type="submission" date="1996-02" db="EMBL/GenBank/DDBJ databases">
        <title>Complete sequence of the E. coli cutC gene.</title>
        <authorList>
            <person name="Gupta S.D."/>
            <person name="Wu H.C."/>
        </authorList>
    </citation>
    <scope>NUCLEOTIDE SEQUENCE [GENOMIC DNA]</scope>
    <source>
        <strain>K12 / MC4100 / ATCC 35695 / DSM 6574</strain>
    </source>
</reference>
<reference key="2">
    <citation type="journal article" date="1996" name="DNA Res.">
        <title>A 460-kb DNA sequence of the Escherichia coli K-12 genome corresponding to the 40.1-50.0 min region on the linkage map.</title>
        <authorList>
            <person name="Itoh T."/>
            <person name="Aiba H."/>
            <person name="Baba T."/>
            <person name="Fujita K."/>
            <person name="Hayashi K."/>
            <person name="Inada T."/>
            <person name="Isono K."/>
            <person name="Kasai H."/>
            <person name="Kimura S."/>
            <person name="Kitakawa M."/>
            <person name="Kitagawa M."/>
            <person name="Makino K."/>
            <person name="Miki T."/>
            <person name="Mizobuchi K."/>
            <person name="Mori H."/>
            <person name="Mori T."/>
            <person name="Motomura K."/>
            <person name="Nakade S."/>
            <person name="Nakamura Y."/>
            <person name="Nashimoto H."/>
            <person name="Nishio Y."/>
            <person name="Oshima T."/>
            <person name="Saito N."/>
            <person name="Sampei G."/>
            <person name="Seki Y."/>
            <person name="Sivasundaram S."/>
            <person name="Tagami H."/>
            <person name="Takeda J."/>
            <person name="Takemoto K."/>
            <person name="Wada C."/>
            <person name="Yamamoto Y."/>
            <person name="Horiuchi T."/>
        </authorList>
    </citation>
    <scope>NUCLEOTIDE SEQUENCE [LARGE SCALE GENOMIC DNA]</scope>
    <source>
        <strain>K12 / W3110 / ATCC 27325 / DSM 5911</strain>
    </source>
</reference>
<reference key="3">
    <citation type="journal article" date="1997" name="Science">
        <title>The complete genome sequence of Escherichia coli K-12.</title>
        <authorList>
            <person name="Blattner F.R."/>
            <person name="Plunkett G. III"/>
            <person name="Bloch C.A."/>
            <person name="Perna N.T."/>
            <person name="Burland V."/>
            <person name="Riley M."/>
            <person name="Collado-Vides J."/>
            <person name="Glasner J.D."/>
            <person name="Rode C.K."/>
            <person name="Mayhew G.F."/>
            <person name="Gregor J."/>
            <person name="Davis N.W."/>
            <person name="Kirkpatrick H.A."/>
            <person name="Goeden M.A."/>
            <person name="Rose D.J."/>
            <person name="Mau B."/>
            <person name="Shao Y."/>
        </authorList>
    </citation>
    <scope>NUCLEOTIDE SEQUENCE [LARGE SCALE GENOMIC DNA]</scope>
    <source>
        <strain>K12 / MG1655 / ATCC 47076</strain>
    </source>
</reference>
<reference key="4">
    <citation type="journal article" date="2006" name="Mol. Syst. Biol.">
        <title>Highly accurate genome sequences of Escherichia coli K-12 strains MG1655 and W3110.</title>
        <authorList>
            <person name="Hayashi K."/>
            <person name="Morooka N."/>
            <person name="Yamamoto Y."/>
            <person name="Fujita K."/>
            <person name="Isono K."/>
            <person name="Choi S."/>
            <person name="Ohtsubo E."/>
            <person name="Baba T."/>
            <person name="Wanner B.L."/>
            <person name="Mori H."/>
            <person name="Horiuchi T."/>
        </authorList>
    </citation>
    <scope>NUCLEOTIDE SEQUENCE [LARGE SCALE GENOMIC DNA]</scope>
    <source>
        <strain>K12 / W3110 / ATCC 27325 / DSM 5911</strain>
    </source>
</reference>
<reference key="5">
    <citation type="journal article" date="1995" name="J. Bacteriol.">
        <title>Identification of cutC and cutF (nlpE) genes involved in copper tolerance in Escherichia coli.</title>
        <authorList>
            <person name="Gupta S.D."/>
            <person name="Lee B.T.O."/>
            <person name="Camakaris J."/>
            <person name="Wu H.C."/>
        </authorList>
    </citation>
    <scope>NUCLEOTIDE SEQUENCE [GENOMIC DNA] OF 44-248</scope>
    <scope>PROBABLE SUBCELLULAR LOCATION</scope>
    <scope>DISRUPTION PHENOTYPE</scope>
    <source>
        <strain>K12 / MC4100 / ATCC 35695 / DSM 6574</strain>
    </source>
</reference>
<reference key="6">
    <citation type="journal article" date="2014" name="Genes Dev.">
        <title>MicL, a new sigmaE-dependent sRNA, combats envelope stress by repressing synthesis of Lpp, the major outer membrane lipoprotein.</title>
        <authorList>
            <person name="Guo M.S."/>
            <person name="Updegrove T.B."/>
            <person name="Gogol E.B."/>
            <person name="Shabalina S.A."/>
            <person name="Gross C.A."/>
            <person name="Storz G."/>
        </authorList>
    </citation>
    <scope>NOT INVOLVED IN COPPER HOMEOSTASIS</scope>
    <scope>DISRUPTION PHENOTYPE</scope>
</reference>
<evidence type="ECO:0000250" key="1">
    <source>
        <dbReference type="UniProtKB" id="P67825"/>
    </source>
</evidence>
<evidence type="ECO:0000255" key="2">
    <source>
        <dbReference type="HAMAP-Rule" id="MF_00795"/>
    </source>
</evidence>
<evidence type="ECO:0000269" key="3">
    <source>
    </source>
</evidence>
<evidence type="ECO:0000269" key="4">
    <source>
    </source>
</evidence>
<evidence type="ECO:0000303" key="5">
    <source>
    </source>
</evidence>
<evidence type="ECO:0000305" key="6"/>
<evidence type="ECO:0000305" key="7">
    <source>
    </source>
</evidence>
<dbReference type="EMBL" id="L38618">
    <property type="protein sequence ID" value="AAA89202.1"/>
    <property type="molecule type" value="Genomic_DNA"/>
</dbReference>
<dbReference type="EMBL" id="U00096">
    <property type="protein sequence ID" value="AAC74944.2"/>
    <property type="molecule type" value="Genomic_DNA"/>
</dbReference>
<dbReference type="EMBL" id="AP009048">
    <property type="protein sequence ID" value="BAA15684.1"/>
    <property type="molecule type" value="Genomic_DNA"/>
</dbReference>
<dbReference type="PIR" id="B64950">
    <property type="entry name" value="B64950"/>
</dbReference>
<dbReference type="RefSeq" id="WP_001185741.1">
    <property type="nucleotide sequence ID" value="NZ_STEB01000026.1"/>
</dbReference>
<dbReference type="RefSeq" id="YP_025309.2">
    <property type="nucleotide sequence ID" value="NC_000913.3"/>
</dbReference>
<dbReference type="SMR" id="P67826"/>
<dbReference type="BioGRID" id="4262958">
    <property type="interactions" value="22"/>
</dbReference>
<dbReference type="FunCoup" id="P67826">
    <property type="interactions" value="224"/>
</dbReference>
<dbReference type="IntAct" id="P67826">
    <property type="interactions" value="6"/>
</dbReference>
<dbReference type="STRING" id="511145.b1874"/>
<dbReference type="TCDB" id="9.B.158.1.2">
    <property type="family name" value="the cut copper homeostasis (cut) family"/>
</dbReference>
<dbReference type="jPOST" id="P67826"/>
<dbReference type="PaxDb" id="511145-b1874"/>
<dbReference type="EnsemblBacteria" id="AAC74944">
    <property type="protein sequence ID" value="AAC74944"/>
    <property type="gene ID" value="b1874"/>
</dbReference>
<dbReference type="GeneID" id="2847756"/>
<dbReference type="GeneID" id="93776175"/>
<dbReference type="KEGG" id="ecj:JW1863"/>
<dbReference type="KEGG" id="eco:b1874"/>
<dbReference type="KEGG" id="ecoc:C3026_10665"/>
<dbReference type="PATRIC" id="fig|1411691.4.peg.374"/>
<dbReference type="EchoBASE" id="EB2790"/>
<dbReference type="eggNOG" id="COG3142">
    <property type="taxonomic scope" value="Bacteria"/>
</dbReference>
<dbReference type="HOGENOM" id="CLU_050555_3_1_6"/>
<dbReference type="InParanoid" id="P67826"/>
<dbReference type="OMA" id="HRAFDQC"/>
<dbReference type="OrthoDB" id="9815677at2"/>
<dbReference type="PhylomeDB" id="P67826"/>
<dbReference type="BioCyc" id="EcoCyc:G7024-MONOMER"/>
<dbReference type="PRO" id="PR:P67826"/>
<dbReference type="Proteomes" id="UP000000625">
    <property type="component" value="Chromosome"/>
</dbReference>
<dbReference type="GO" id="GO:0005737">
    <property type="term" value="C:cytoplasm"/>
    <property type="evidence" value="ECO:0007669"/>
    <property type="project" value="UniProtKB-SubCell"/>
</dbReference>
<dbReference type="GO" id="GO:0005507">
    <property type="term" value="F:copper ion binding"/>
    <property type="evidence" value="ECO:0000318"/>
    <property type="project" value="GO_Central"/>
</dbReference>
<dbReference type="FunFam" id="3.20.20.380:FF:000001">
    <property type="entry name" value="Copper homeostasis protein CutC"/>
    <property type="match status" value="1"/>
</dbReference>
<dbReference type="Gene3D" id="3.20.20.380">
    <property type="entry name" value="Copper homeostasis (CutC) domain"/>
    <property type="match status" value="1"/>
</dbReference>
<dbReference type="HAMAP" id="MF_00795">
    <property type="entry name" value="CutC"/>
    <property type="match status" value="1"/>
</dbReference>
<dbReference type="InterPro" id="IPR005627">
    <property type="entry name" value="CutC-like"/>
</dbReference>
<dbReference type="InterPro" id="IPR036822">
    <property type="entry name" value="CutC-like_dom_sf"/>
</dbReference>
<dbReference type="NCBIfam" id="NF008603">
    <property type="entry name" value="PRK11572.1"/>
    <property type="match status" value="1"/>
</dbReference>
<dbReference type="PANTHER" id="PTHR12598">
    <property type="entry name" value="COPPER HOMEOSTASIS PROTEIN CUTC"/>
    <property type="match status" value="1"/>
</dbReference>
<dbReference type="PANTHER" id="PTHR12598:SF0">
    <property type="entry name" value="COPPER HOMEOSTASIS PROTEIN CUTC HOMOLOG"/>
    <property type="match status" value="1"/>
</dbReference>
<dbReference type="Pfam" id="PF03932">
    <property type="entry name" value="CutC"/>
    <property type="match status" value="1"/>
</dbReference>
<dbReference type="SUPFAM" id="SSF110395">
    <property type="entry name" value="CutC-like"/>
    <property type="match status" value="1"/>
</dbReference>
<comment type="subunit">
    <text evidence="1 2">Homodimer.</text>
</comment>
<comment type="subcellular location">
    <subcellularLocation>
        <location evidence="2 7">Cytoplasm</location>
    </subcellularLocation>
</comment>
<comment type="disruption phenotype">
    <text evidence="3 4">CutC-nlpE double mutants show increased copper sensitivity (PubMed:7635807). However, the copper sensitivity phenotype of the mutant was later shown to be due to the loss of MicL sRNA and elevated Lpp levels (PubMed:25030700).</text>
</comment>
<comment type="similarity">
    <text evidence="2 6">Belongs to the CutC family.</text>
</comment>
<comment type="caution">
    <text evidence="3 4">Was originally thought to be involved in copper homeostasis (PubMed:7635807), however, the copper sensitivity phenotype of the mutant was later shown to be due to the loss of MicL sRNA which leads to elevated Lpp levels (PubMed:25030700). Silent mutations in this protein that disrupt the promoter of micL are copper sensitive.</text>
</comment>
<feature type="chain" id="PRO_0000215064" description="PF03932 family protein CutC">
    <location>
        <begin position="1"/>
        <end position="248"/>
    </location>
</feature>
<feature type="sequence conflict" description="In Ref. 1; AAA89202." evidence="6" ref="1">
    <original>Q</original>
    <variation>H</variation>
    <location>
        <position position="18"/>
    </location>
</feature>
<proteinExistence type="inferred from homology"/>
<sequence>MALLEICCYSMECALTAQQNGADRVELCAAPKEGGLTPSLGVLKSVRQRVTIPVHPIIRPRGGDFCYSDGEFAAILEDVRTVRELGFPGLVTGVLDVDGNVDMPRMEKIMAAAGPLAVTFHRAFDMCANPLYTLNNLAELGIARVLTSGQKSDALQGLSKIMELIAHRDAPIIMAGAGVRAENLHHFLDAGVLEVHSSAGAWQASPMRYRNQGLSMSSDEHADEYSRYIVDGAAVAEMKGIIERHQAK</sequence>
<gene>
    <name evidence="2 5" type="primary">cutC</name>
    <name type="ordered locus">b1874</name>
    <name type="ordered locus">JW1863</name>
</gene>
<protein>
    <recommendedName>
        <fullName evidence="2">PF03932 family protein CutC</fullName>
    </recommendedName>
    <alternativeName>
        <fullName evidence="5">Putative copper homeostasis protein CutC</fullName>
    </alternativeName>
</protein>
<keyword id="KW-0963">Cytoplasm</keyword>
<keyword id="KW-1185">Reference proteome</keyword>